<feature type="chain" id="PRO_0000193724" description="Chitin synthase 6">
    <location>
        <begin position="1"/>
        <end position="1180"/>
    </location>
</feature>
<feature type="transmembrane region" description="Helical" evidence="1">
    <location>
        <begin position="108"/>
        <end position="128"/>
    </location>
</feature>
<feature type="transmembrane region" description="Helical" evidence="1">
    <location>
        <begin position="374"/>
        <end position="394"/>
    </location>
</feature>
<feature type="transmembrane region" description="Helical" evidence="1">
    <location>
        <begin position="762"/>
        <end position="782"/>
    </location>
</feature>
<feature type="transmembrane region" description="Helical" evidence="1">
    <location>
        <begin position="795"/>
        <end position="815"/>
    </location>
</feature>
<feature type="transmembrane region" description="Helical" evidence="1">
    <location>
        <begin position="822"/>
        <end position="842"/>
    </location>
</feature>
<feature type="domain" description="DEK-C" evidence="2">
    <location>
        <begin position="1118"/>
        <end position="1175"/>
    </location>
</feature>
<feature type="glycosylation site" description="N-linked (GlcNAc...) asparagine" evidence="1">
    <location>
        <position position="737"/>
    </location>
</feature>
<feature type="sequence conflict" description="In Ref. 1; AAB84285." evidence="8" ref="1">
    <original>G</original>
    <variation>R</variation>
    <location>
        <position position="196"/>
    </location>
</feature>
<proteinExistence type="evidence at protein level"/>
<evidence type="ECO:0000255" key="1"/>
<evidence type="ECO:0000255" key="2">
    <source>
        <dbReference type="PROSITE-ProRule" id="PRU01342"/>
    </source>
</evidence>
<evidence type="ECO:0000269" key="3">
    <source>
    </source>
</evidence>
<evidence type="ECO:0000269" key="4">
    <source>
    </source>
</evidence>
<evidence type="ECO:0000269" key="5">
    <source>
    </source>
</evidence>
<evidence type="ECO:0000269" key="6">
    <source>
    </source>
</evidence>
<evidence type="ECO:0000303" key="7">
    <source>
    </source>
</evidence>
<evidence type="ECO:0000305" key="8"/>
<protein>
    <recommendedName>
        <fullName evidence="7">Chitin synthase 6</fullName>
        <ecNumber evidence="3">2.4.1.16</ecNumber>
    </recommendedName>
    <alternativeName>
        <fullName evidence="8">Chitin-UDP acetyl-glucosaminyl transferase 6</fullName>
    </alternativeName>
    <alternativeName>
        <fullName evidence="7">Class-V chitin synthase 6</fullName>
    </alternativeName>
</protein>
<dbReference type="EC" id="2.4.1.16" evidence="3"/>
<dbReference type="EMBL" id="AF030554">
    <property type="protein sequence ID" value="AAB84285.1"/>
    <property type="status" value="ALT_FRAME"/>
    <property type="molecule type" value="Genomic_DNA"/>
</dbReference>
<dbReference type="EMBL" id="CM003146">
    <property type="protein sequence ID" value="KIS69073.1"/>
    <property type="molecule type" value="Genomic_DNA"/>
</dbReference>
<dbReference type="PIR" id="T42022">
    <property type="entry name" value="T42022"/>
</dbReference>
<dbReference type="RefSeq" id="XP_011389509.1">
    <property type="nucleotide sequence ID" value="XM_011391207.1"/>
</dbReference>
<dbReference type="STRING" id="237631.O13395"/>
<dbReference type="CAZy" id="GT2">
    <property type="family name" value="Glycosyltransferase Family 2"/>
</dbReference>
<dbReference type="GlyCosmos" id="O13395">
    <property type="glycosylation" value="1 site, No reported glycans"/>
</dbReference>
<dbReference type="EnsemblFungi" id="KIS69073">
    <property type="protein sequence ID" value="KIS69073"/>
    <property type="gene ID" value="UMAG_10367"/>
</dbReference>
<dbReference type="GeneID" id="23566410"/>
<dbReference type="KEGG" id="uma:UMAG_10367"/>
<dbReference type="VEuPathDB" id="FungiDB:UMAG_10367"/>
<dbReference type="eggNOG" id="KOG2571">
    <property type="taxonomic scope" value="Eukaryota"/>
</dbReference>
<dbReference type="InParanoid" id="O13395"/>
<dbReference type="OrthoDB" id="370884at2759"/>
<dbReference type="BRENDA" id="2.4.1.16">
    <property type="organism ID" value="6587"/>
</dbReference>
<dbReference type="PHI-base" id="PHI:1116"/>
<dbReference type="PHI-base" id="PHI:389"/>
<dbReference type="Proteomes" id="UP000000561">
    <property type="component" value="Chromosome 7"/>
</dbReference>
<dbReference type="GO" id="GO:0071944">
    <property type="term" value="C:cell periphery"/>
    <property type="evidence" value="ECO:0000318"/>
    <property type="project" value="GO_Central"/>
</dbReference>
<dbReference type="GO" id="GO:0030428">
    <property type="term" value="C:cell septum"/>
    <property type="evidence" value="ECO:0000318"/>
    <property type="project" value="GO_Central"/>
</dbReference>
<dbReference type="GO" id="GO:0030659">
    <property type="term" value="C:cytoplasmic vesicle membrane"/>
    <property type="evidence" value="ECO:0007669"/>
    <property type="project" value="UniProtKB-SubCell"/>
</dbReference>
<dbReference type="GO" id="GO:0005886">
    <property type="term" value="C:plasma membrane"/>
    <property type="evidence" value="ECO:0007669"/>
    <property type="project" value="UniProtKB-SubCell"/>
</dbReference>
<dbReference type="GO" id="GO:0004100">
    <property type="term" value="F:chitin synthase activity"/>
    <property type="evidence" value="ECO:0000318"/>
    <property type="project" value="GO_Central"/>
</dbReference>
<dbReference type="GO" id="GO:0006031">
    <property type="term" value="P:chitin biosynthetic process"/>
    <property type="evidence" value="ECO:0000318"/>
    <property type="project" value="GO_Central"/>
</dbReference>
<dbReference type="GO" id="GO:0031505">
    <property type="term" value="P:fungal-type cell wall organization"/>
    <property type="evidence" value="ECO:0000318"/>
    <property type="project" value="GO_Central"/>
</dbReference>
<dbReference type="CDD" id="cd04190">
    <property type="entry name" value="Chitin_synth_C"/>
    <property type="match status" value="1"/>
</dbReference>
<dbReference type="FunFam" id="3.10.120.10:FF:000014">
    <property type="entry name" value="Chitin synthase 6"/>
    <property type="match status" value="1"/>
</dbReference>
<dbReference type="Gene3D" id="3.10.120.10">
    <property type="entry name" value="Cytochrome b5-like heme/steroid binding domain"/>
    <property type="match status" value="2"/>
</dbReference>
<dbReference type="Gene3D" id="1.10.10.60">
    <property type="entry name" value="Homeodomain-like"/>
    <property type="match status" value="1"/>
</dbReference>
<dbReference type="InterPro" id="IPR004835">
    <property type="entry name" value="Chitin_synth"/>
</dbReference>
<dbReference type="InterPro" id="IPR001199">
    <property type="entry name" value="Cyt_B5-like_heme/steroid-bd"/>
</dbReference>
<dbReference type="InterPro" id="IPR036400">
    <property type="entry name" value="Cyt_B5-like_heme/steroid_sf"/>
</dbReference>
<dbReference type="InterPro" id="IPR014876">
    <property type="entry name" value="DEK_C"/>
</dbReference>
<dbReference type="InterPro" id="IPR029044">
    <property type="entry name" value="Nucleotide-diphossugar_trans"/>
</dbReference>
<dbReference type="PANTHER" id="PTHR22914">
    <property type="entry name" value="CHITIN SYNTHASE"/>
    <property type="match status" value="1"/>
</dbReference>
<dbReference type="PANTHER" id="PTHR22914:SF13">
    <property type="entry name" value="CHITIN SYNTHASE"/>
    <property type="match status" value="1"/>
</dbReference>
<dbReference type="Pfam" id="PF03142">
    <property type="entry name" value="Chitin_synth_2"/>
    <property type="match status" value="1"/>
</dbReference>
<dbReference type="Pfam" id="PF00173">
    <property type="entry name" value="Cyt-b5"/>
    <property type="match status" value="1"/>
</dbReference>
<dbReference type="Pfam" id="PF08766">
    <property type="entry name" value="DEK_C"/>
    <property type="match status" value="1"/>
</dbReference>
<dbReference type="SMART" id="SM01117">
    <property type="entry name" value="Cyt-b5"/>
    <property type="match status" value="2"/>
</dbReference>
<dbReference type="SUPFAM" id="SSF55856">
    <property type="entry name" value="Cytochrome b5-like heme/steroid binding domain"/>
    <property type="match status" value="1"/>
</dbReference>
<dbReference type="SUPFAM" id="SSF109715">
    <property type="entry name" value="DEK C-terminal domain"/>
    <property type="match status" value="1"/>
</dbReference>
<dbReference type="SUPFAM" id="SSF53448">
    <property type="entry name" value="Nucleotide-diphospho-sugar transferases"/>
    <property type="match status" value="1"/>
</dbReference>
<dbReference type="PROSITE" id="PS51998">
    <property type="entry name" value="DEK_C"/>
    <property type="match status" value="1"/>
</dbReference>
<accession>O13395</accession>
<accession>A0A0D1CR95</accession>
<accession>Q4PA11</accession>
<reference key="1">
    <citation type="journal article" date="1997" name="Fungal Genet. Biol.">
        <title>Umchs5, a gene coding for a class IV chitin synthase in Ustilago maydis.</title>
        <authorList>
            <person name="Xoconostle-Cazares B."/>
            <person name="Specht C.A."/>
            <person name="Robbins P.W."/>
            <person name="Liu Y."/>
            <person name="Leon C."/>
            <person name="Ruiz-Herrera J."/>
        </authorList>
    </citation>
    <scope>NUCLEOTIDE SEQUENCE [GENOMIC DNA]</scope>
    <source>
        <strain>518</strain>
    </source>
</reference>
<reference key="2">
    <citation type="journal article" date="2006" name="Nature">
        <title>Insights from the genome of the biotrophic fungal plant pathogen Ustilago maydis.</title>
        <authorList>
            <person name="Kaemper J."/>
            <person name="Kahmann R."/>
            <person name="Boelker M."/>
            <person name="Ma L.-J."/>
            <person name="Brefort T."/>
            <person name="Saville B.J."/>
            <person name="Banuett F."/>
            <person name="Kronstad J.W."/>
            <person name="Gold S.E."/>
            <person name="Mueller O."/>
            <person name="Perlin M.H."/>
            <person name="Woesten H.A.B."/>
            <person name="de Vries R."/>
            <person name="Ruiz-Herrera J."/>
            <person name="Reynaga-Pena C.G."/>
            <person name="Snetselaar K."/>
            <person name="McCann M."/>
            <person name="Perez-Martin J."/>
            <person name="Feldbruegge M."/>
            <person name="Basse C.W."/>
            <person name="Steinberg G."/>
            <person name="Ibeas J.I."/>
            <person name="Holloman W."/>
            <person name="Guzman P."/>
            <person name="Farman M.L."/>
            <person name="Stajich J.E."/>
            <person name="Sentandreu R."/>
            <person name="Gonzalez-Prieto J.M."/>
            <person name="Kennell J.C."/>
            <person name="Molina L."/>
            <person name="Schirawski J."/>
            <person name="Mendoza-Mendoza A."/>
            <person name="Greilinger D."/>
            <person name="Muench K."/>
            <person name="Roessel N."/>
            <person name="Scherer M."/>
            <person name="Vranes M."/>
            <person name="Ladendorf O."/>
            <person name="Vincon V."/>
            <person name="Fuchs U."/>
            <person name="Sandrock B."/>
            <person name="Meng S."/>
            <person name="Ho E.C.H."/>
            <person name="Cahill M.J."/>
            <person name="Boyce K.J."/>
            <person name="Klose J."/>
            <person name="Klosterman S.J."/>
            <person name="Deelstra H.J."/>
            <person name="Ortiz-Castellanos L."/>
            <person name="Li W."/>
            <person name="Sanchez-Alonso P."/>
            <person name="Schreier P.H."/>
            <person name="Haeuser-Hahn I."/>
            <person name="Vaupel M."/>
            <person name="Koopmann E."/>
            <person name="Friedrich G."/>
            <person name="Voss H."/>
            <person name="Schlueter T."/>
            <person name="Margolis J."/>
            <person name="Platt D."/>
            <person name="Swimmer C."/>
            <person name="Gnirke A."/>
            <person name="Chen F."/>
            <person name="Vysotskaia V."/>
            <person name="Mannhaupt G."/>
            <person name="Gueldener U."/>
            <person name="Muensterkoetter M."/>
            <person name="Haase D."/>
            <person name="Oesterheld M."/>
            <person name="Mewes H.-W."/>
            <person name="Mauceli E.W."/>
            <person name="DeCaprio D."/>
            <person name="Wade C.M."/>
            <person name="Butler J."/>
            <person name="Young S.K."/>
            <person name="Jaffe D.B."/>
            <person name="Calvo S.E."/>
            <person name="Nusbaum C."/>
            <person name="Galagan J.E."/>
            <person name="Birren B.W."/>
        </authorList>
    </citation>
    <scope>NUCLEOTIDE SEQUENCE [LARGE SCALE GENOMIC DNA]</scope>
    <source>
        <strain>DSM 14603 / FGSC 9021 / UM521</strain>
    </source>
</reference>
<reference key="3">
    <citation type="submission" date="2014-09" db="EMBL/GenBank/DDBJ databases">
        <authorList>
            <person name="Gueldener U."/>
            <person name="Muensterkoetter M."/>
            <person name="Walter M.C."/>
            <person name="Mannhaupt G."/>
            <person name="Kahmann R."/>
        </authorList>
    </citation>
    <scope>GENOME REANNOTATION</scope>
    <source>
        <strain>DSM 14603 / FGSC 9021 / UM521</strain>
    </source>
</reference>
<reference key="4">
    <citation type="journal article" date="2006" name="FEMS Yeast Res.">
        <title>Immunolocalization of chitin synthases in the phytopathogenic dimorphic fungus Ustilago maydis.</title>
        <authorList>
            <person name="Ruiz-Herrera J."/>
            <person name="Xoconostle-Cazares B."/>
            <person name="Reynaga-Pena C.G."/>
            <person name="Leon-Ramirez C."/>
            <person name="Carabez-Trejo A."/>
        </authorList>
    </citation>
    <scope>SUBCELLULAR LOCATION</scope>
</reference>
<reference key="5">
    <citation type="journal article" date="2006" name="Plant Cell">
        <title>Polar localizing class V myosin chitin synthases are essential during early plant infection in the plant pathogenic fungus Ustilago maydis.</title>
        <authorList>
            <person name="Weber I."/>
            <person name="Assmann D."/>
            <person name="Thines E."/>
            <person name="Steinberg G."/>
        </authorList>
    </citation>
    <scope>FUNCTION</scope>
    <scope>SUBCELLULAR LOCATION</scope>
</reference>
<reference key="6">
    <citation type="journal article" date="2004" name="Res. Microbiol.">
        <title>Loss of virulence in Ustilago maydis by Umchs6 gene disruption.</title>
        <authorList>
            <person name="Garcera-Teruel A."/>
            <person name="Xoconostle-Cazares B."/>
            <person name="Rosas-Quijano R."/>
            <person name="Ortiz L."/>
            <person name="Leon-Ramirez C."/>
            <person name="Specht C.A."/>
            <person name="Sentandreu R."/>
            <person name="Ruiz-Herrera J."/>
        </authorList>
    </citation>
    <scope>FUNCTION</scope>
    <scope>DISRUPTION PHENOTYPE</scope>
    <scope>CATALYTIC ACTIVITY</scope>
</reference>
<reference key="7">
    <citation type="journal article" date="2012" name="Curr. Microbiol.">
        <title>Transcriptional regulation of the genes encoding chitin and beta-1,3-glucan synthases from Ustilago maydis.</title>
        <authorList>
            <person name="Robledo-Briones M."/>
            <person name="Ruiz-Herrera J."/>
        </authorList>
    </citation>
    <scope>INDUCTION</scope>
</reference>
<name>CHS6_MYCMD</name>
<organism>
    <name type="scientific">Mycosarcoma maydis</name>
    <name type="common">Corn smut fungus</name>
    <name type="synonym">Ustilago maydis</name>
    <dbReference type="NCBI Taxonomy" id="5270"/>
    <lineage>
        <taxon>Eukaryota</taxon>
        <taxon>Fungi</taxon>
        <taxon>Dikarya</taxon>
        <taxon>Basidiomycota</taxon>
        <taxon>Ustilaginomycotina</taxon>
        <taxon>Ustilaginomycetes</taxon>
        <taxon>Ustilaginales</taxon>
        <taxon>Ustilaginaceae</taxon>
        <taxon>Mycosarcoma</taxon>
    </lineage>
</organism>
<comment type="function">
    <text evidence="3 4">Polymerizes chitin, a structural polymer of the cell wall and septum, by transferring the sugar moiety of UDP-GlcNAc to the non-reducing end of the growing chitin polymer (PubMed:14990260, PubMed:16314447). Plays a crucial role during infection and allows the fungus to overcome the resistance of the plant that checks growth of the pathogen and eventually eliminates it (PubMed:14990260).</text>
</comment>
<comment type="catalytic activity">
    <reaction evidence="3">
        <text>[(1-&gt;4)-N-acetyl-beta-D-glucosaminyl](n) + UDP-N-acetyl-alpha-D-glucosamine = [(1-&gt;4)-N-acetyl-beta-D-glucosaminyl](n+1) + UDP + H(+)</text>
        <dbReference type="Rhea" id="RHEA:16637"/>
        <dbReference type="Rhea" id="RHEA-COMP:9593"/>
        <dbReference type="Rhea" id="RHEA-COMP:9595"/>
        <dbReference type="ChEBI" id="CHEBI:15378"/>
        <dbReference type="ChEBI" id="CHEBI:17029"/>
        <dbReference type="ChEBI" id="CHEBI:57705"/>
        <dbReference type="ChEBI" id="CHEBI:58223"/>
        <dbReference type="EC" id="2.4.1.16"/>
    </reaction>
    <physiologicalReaction direction="left-to-right" evidence="3">
        <dbReference type="Rhea" id="RHEA:16638"/>
    </physiologicalReaction>
</comment>
<comment type="subcellular location">
    <subcellularLocation>
        <location evidence="4">Cell membrane</location>
        <topology evidence="1">Multi-pass membrane protein</topology>
    </subcellularLocation>
    <subcellularLocation>
        <location evidence="5">Cytoplasmic vesicle membrane</location>
        <topology evidence="1">Multi-pass membrane protein</topology>
    </subcellularLocation>
    <text evidence="4 5">A constitutive cytoplasmic pool is present that localizes to intracellular microvesicles termed chitosomes. Chitosomes constitute a separate secretory route distinct from the typical secretory pathway and serve as a vehicle for delivering the enzyme to the sites on the cell surface where polysaccharide sythesis takes place. Localizes to septa of yeast-like cells and to the basal septum separating the living tip cell from the vacuolated part in hyphae. Also localizes to the growing bud tip in yeast-like cells and in a tip-ward gradient at the hyphal apex.</text>
</comment>
<comment type="induction">
    <text evidence="6">Expression is slightly lower in the yeast form than in the mycelium and shows a maximal expression in the log phase at about 14-18 h of incubation (PubMed:22538468). Highly expressed during the chlorosis stage and the stage of white tumors of plant infection (PubMed:22538468).</text>
</comment>
<comment type="disruption phenotype">
    <text evidence="3">Does not effect the dimorphic transition in vitro, mating, nor growth rate. Leads to important alterations in cell morphology, particularly at the mycelial stage, and in the staining pattern with calcofluor white (PubMed:14990260). Reduces levels of chitin synthase activity and subsequent chitin content (PubMed:14990260). Almost completely abolishes virulence to maize (PubMed:14990260).</text>
</comment>
<comment type="similarity">
    <text evidence="8">Belongs to the chitin synthase family. Class V subfamily.</text>
</comment>
<comment type="sequence caution" evidence="8">
    <conflict type="frameshift">
        <sequence resource="EMBL-CDS" id="AAB84285"/>
    </conflict>
</comment>
<sequence>MSTKDAHDPFATPLETITHDPLAETAGLKADYDKRAYGEANPALMGTLEKDDMANRPIDAVEEVPTTSIRKWWVRLTWFTTWWIPSFVLSKCGGMKRPDVQMAWREKFTICAIIFWLCAIILFYIIAFGRLLCPDYDKAWNLSQLSQHAGENDYYAAVRGTVYDFSKFYKGDHSDITNLQTSSDLMLQLAGQDLTGYFPVPLSVGCQSLVSDTSLALMPTANNTPLISQAIHTSGPLQGDTSSKLHDINWYPDRFLPFVKKLRKGYYVYSKKDLANQGQWRNWAVIHGKVYDLSNYLNTVSTYQTNPAYSFLDSSIVSLFKSQAGSDITADFEDAMSTFNQTYRGATQACLDNVFYVGRTDFRDTARCEVQNYLLLAFSVLLVTTVLAKFIAALQLGTKRSPEQQDKFVICQVPCYTEGEEELRKTIDSLAGLEYDDKRKLLFLICDGMIVGSGNDRSTPRIVLDILGVDPKIDPEPLMFKSVAEGSKQLNYAKVYSGLYEFEGHVVPYIVVVKVGRPSERSRPGNRGKRDSQILLMRYLNRVHFDAPMFPLELEIYHQMKNVIGIDPAFYEYILMVDADTRVEADGLNRLVANCADDSSIIAICGETTLDNAEGSWWTMIQVYEYYISHHLSKAFESLFGSVTCLPGCFSLYRIRSSDKGRPLFISNRIIDDYSENRVDTLHKKNLLHLGEDRYLTTLVLKNFPSFRTKFVPDAKALTSAPDRFGVLLSQRRRWINSTVHNLAELVLMPELCGFCLFSMRFIVFIDLLGTVILPATAVYLVYLIVTVATKSAPIPYISIAMIAAVYGLQAILFLLKRQWQYIGWLVIYILAYPVFSFFLPIYSFWHMDDFSWGNTRIVVGEKGNKKIVAGTDDEPYDDTMIPLKRFSEYQREVWEEEAAAPSMRSGMTGASGPFGNSQAILHSGPPSVYRAGGSAYAGSVAGSDYGAGLGDYYQNTNVLQKPAHSRQTSAAALSQMGGSQAASMMFGTGTPSVYGMAGMGSMYGMPGSSASMYGLPNPMMNTTASMYGLPPMLANPLGANHSPAHSDIGVSMPVSQQNTGGSHIWAQPPEAATVAANSGRGSGMQARPVSTLSALNATNPFGVTAVARALAVNEASDPTDEEIKSAVQTYLANQPSLMNVTKRSVREALVAAFPNAELSYKKSMINKAIDDTLSGGAQA</sequence>
<keyword id="KW-1003">Cell membrane</keyword>
<keyword id="KW-0961">Cell wall biogenesis/degradation</keyword>
<keyword id="KW-0968">Cytoplasmic vesicle</keyword>
<keyword id="KW-0325">Glycoprotein</keyword>
<keyword id="KW-0328">Glycosyltransferase</keyword>
<keyword id="KW-0472">Membrane</keyword>
<keyword id="KW-1185">Reference proteome</keyword>
<keyword id="KW-0808">Transferase</keyword>
<keyword id="KW-0812">Transmembrane</keyword>
<keyword id="KW-1133">Transmembrane helix</keyword>
<gene>
    <name evidence="7" type="primary">CHS6</name>
    <name type="ORF">UMAG_10367</name>
</gene>